<protein>
    <recommendedName>
        <fullName evidence="1">Glycerol-3-phosphate acyltransferase 4</fullName>
        <shortName>GPAT4</shortName>
        <ecNumber evidence="1">2.3.1.15</ecNumber>
    </recommendedName>
    <alternativeName>
        <fullName>1-acylglycerol-3-phosphate O-acyltransferase 6</fullName>
        <shortName>1-AGP acyltransferase 6</shortName>
        <shortName>1-AGPAT 6</shortName>
    </alternativeName>
    <alternativeName>
        <fullName>Acyl-CoA:glycerol-3-phosphate acyltransferase 4</fullName>
    </alternativeName>
    <alternativeName>
        <fullName>Lysophosphatidic acid acyltransferase zeta</fullName>
        <shortName>LPAAT-zeta</shortName>
    </alternativeName>
</protein>
<sequence length="456" mass="52055">MFLLLPFDSLIVSLLGISLTVLFTLLLVFIIVPAVFGVSFGIRKLYMKTLLKIFAWATLRMERGAKEKNHQLYKPYTNGIIAKDPTSLEEEIKEIRRSGSSKALDNTPEFELSDIFYFCRKGMETIMDDEVTKRFSAEELESWNLLSRTNYNFQYISLRLTVLWGLGVLIRYCLLLSLRIALAFTGISLLVVGTTMVGYLPNGRFKEFLSKHVHLMCYRICVRALTAIITYHDRKNRPRNGGICVANHTSPIDVIILASDGYYAMVGQVHGGLMGVIQRAMVKACPHVWFERSEVKDRHLVARRLTEHVQDKSKLPILIFPEGTCINNTSVMMFKKGSFEIGATVYPVAIKYDPQFGDAFWNSSKYGMVTYLLRMMTSWAIVCSVWYLPPMTRQAEEDAVQFANRVKSAIARQGGLVDLLWDGGLKREKVKDTFKEEQQKLYSKMIVGNHEDRSRS</sequence>
<organism>
    <name type="scientific">Bos taurus</name>
    <name type="common">Bovine</name>
    <dbReference type="NCBI Taxonomy" id="9913"/>
    <lineage>
        <taxon>Eukaryota</taxon>
        <taxon>Metazoa</taxon>
        <taxon>Chordata</taxon>
        <taxon>Craniata</taxon>
        <taxon>Vertebrata</taxon>
        <taxon>Euteleostomi</taxon>
        <taxon>Mammalia</taxon>
        <taxon>Eutheria</taxon>
        <taxon>Laurasiatheria</taxon>
        <taxon>Artiodactyla</taxon>
        <taxon>Ruminantia</taxon>
        <taxon>Pecora</taxon>
        <taxon>Bovidae</taxon>
        <taxon>Bovinae</taxon>
        <taxon>Bos</taxon>
    </lineage>
</organism>
<evidence type="ECO:0000250" key="1">
    <source>
        <dbReference type="UniProtKB" id="Q86UL3"/>
    </source>
</evidence>
<evidence type="ECO:0000250" key="2">
    <source>
        <dbReference type="UniProtKB" id="Q9D517"/>
    </source>
</evidence>
<evidence type="ECO:0000255" key="3"/>
<evidence type="ECO:0000305" key="4"/>
<name>GPAT4_BOVIN</name>
<gene>
    <name evidence="1" type="primary">GPAT4</name>
    <name type="synonym">AGPAT6</name>
</gene>
<reference key="1">
    <citation type="submission" date="2007-01" db="EMBL/GenBank/DDBJ databases">
        <title>Bos taurus 1-acylglycerol-3-phosphate O-acyltransferase 6 (AGPAT6) gene.</title>
        <authorList>
            <person name="Zhang J.L."/>
            <person name="Zan L.S."/>
        </authorList>
    </citation>
    <scope>NUCLEOTIDE SEQUENCE [GENOMIC DNA]</scope>
</reference>
<accession>A3FPG8</accession>
<comment type="function">
    <text evidence="1">Converts glycerol-3-phosphate to 1-acyl-sn-glycerol-3-phosphate (lysophosphatidic acid or LPA) by incorporating an acyl moiety at the sn-1 position of the glycerol backbone. Active against both saturated and unsaturated long-chain fatty acyl-CoAs. Protects cells against lipotoxicity.</text>
</comment>
<comment type="catalytic activity">
    <reaction evidence="1">
        <text>sn-glycerol 3-phosphate + an acyl-CoA = a 1-acyl-sn-glycero-3-phosphate + CoA</text>
        <dbReference type="Rhea" id="RHEA:15325"/>
        <dbReference type="ChEBI" id="CHEBI:57287"/>
        <dbReference type="ChEBI" id="CHEBI:57597"/>
        <dbReference type="ChEBI" id="CHEBI:57970"/>
        <dbReference type="ChEBI" id="CHEBI:58342"/>
        <dbReference type="EC" id="2.3.1.15"/>
    </reaction>
    <physiologicalReaction direction="left-to-right" evidence="1">
        <dbReference type="Rhea" id="RHEA:15326"/>
    </physiologicalReaction>
</comment>
<comment type="catalytic activity">
    <reaction evidence="1">
        <text>dodecanoyl-CoA + sn-glycerol 3-phosphate = 1-dodecanoyl-sn-glycerol 3-phosphate + CoA</text>
        <dbReference type="Rhea" id="RHEA:35727"/>
        <dbReference type="ChEBI" id="CHEBI:57287"/>
        <dbReference type="ChEBI" id="CHEBI:57375"/>
        <dbReference type="ChEBI" id="CHEBI:57597"/>
        <dbReference type="ChEBI" id="CHEBI:72682"/>
    </reaction>
    <physiologicalReaction direction="left-to-right" evidence="1">
        <dbReference type="Rhea" id="RHEA:35728"/>
    </physiologicalReaction>
</comment>
<comment type="catalytic activity">
    <reaction evidence="1">
        <text>sn-glycerol 3-phosphate + hexadecanoyl-CoA = 1-hexadecanoyl-sn-glycero-3-phosphate + CoA</text>
        <dbReference type="Rhea" id="RHEA:35723"/>
        <dbReference type="ChEBI" id="CHEBI:57287"/>
        <dbReference type="ChEBI" id="CHEBI:57379"/>
        <dbReference type="ChEBI" id="CHEBI:57518"/>
        <dbReference type="ChEBI" id="CHEBI:57597"/>
    </reaction>
    <physiologicalReaction direction="left-to-right" evidence="1">
        <dbReference type="Rhea" id="RHEA:35724"/>
    </physiologicalReaction>
</comment>
<comment type="catalytic activity">
    <reaction evidence="1">
        <text>sn-glycerol 3-phosphate + octadecanoyl-CoA = 1-octadecanoyl-sn-glycero-3-phosphate + CoA</text>
        <dbReference type="Rhea" id="RHEA:37195"/>
        <dbReference type="ChEBI" id="CHEBI:57287"/>
        <dbReference type="ChEBI" id="CHEBI:57394"/>
        <dbReference type="ChEBI" id="CHEBI:57597"/>
        <dbReference type="ChEBI" id="CHEBI:74565"/>
    </reaction>
    <physiologicalReaction direction="left-to-right" evidence="1">
        <dbReference type="Rhea" id="RHEA:37196"/>
    </physiologicalReaction>
</comment>
<comment type="catalytic activity">
    <reaction evidence="1">
        <text>sn-glycerol 3-phosphate + (9Z)-octadecenoyl-CoA = 1-(9Z-octadecenoyl)-sn-glycero-3-phosphate + CoA</text>
        <dbReference type="Rhea" id="RHEA:37199"/>
        <dbReference type="ChEBI" id="CHEBI:57287"/>
        <dbReference type="ChEBI" id="CHEBI:57387"/>
        <dbReference type="ChEBI" id="CHEBI:57597"/>
        <dbReference type="ChEBI" id="CHEBI:74544"/>
    </reaction>
    <physiologicalReaction direction="left-to-right" evidence="1">
        <dbReference type="Rhea" id="RHEA:37200"/>
    </physiologicalReaction>
</comment>
<comment type="catalytic activity">
    <reaction evidence="1">
        <text>(9Z,12Z)-octadecadienoyl-CoA + sn-glycerol 3-phosphate = 1-(9Z,12Z)-octadecadienoyl-sn-glycero-3-phosphate + CoA</text>
        <dbReference type="Rhea" id="RHEA:37203"/>
        <dbReference type="ChEBI" id="CHEBI:57287"/>
        <dbReference type="ChEBI" id="CHEBI:57383"/>
        <dbReference type="ChEBI" id="CHEBI:57597"/>
        <dbReference type="ChEBI" id="CHEBI:74547"/>
    </reaction>
    <physiologicalReaction direction="left-to-right" evidence="1">
        <dbReference type="Rhea" id="RHEA:37204"/>
    </physiologicalReaction>
</comment>
<comment type="pathway">
    <text>Phospholipid metabolism; CDP-diacylglycerol biosynthesis; CDP-diacylglycerol from sn-glycerol 3-phosphate: step 1/3.</text>
</comment>
<comment type="subcellular location">
    <subcellularLocation>
        <location evidence="1">Endoplasmic reticulum membrane</location>
        <topology evidence="3">Multi-pass membrane protein</topology>
    </subcellularLocation>
</comment>
<comment type="domain">
    <text evidence="2">The HXXXXD motif is essential for acyltransferase activity and may constitute the binding site for the phosphate moiety of the glycerol-3-phosphate.</text>
</comment>
<comment type="similarity">
    <text evidence="4">Belongs to the 1-acyl-sn-glycerol-3-phosphate acyltransferase family.</text>
</comment>
<dbReference type="EC" id="2.3.1.15" evidence="1"/>
<dbReference type="EMBL" id="EF432784">
    <property type="protein sequence ID" value="ABN50363.1"/>
    <property type="molecule type" value="Genomic_DNA"/>
</dbReference>
<dbReference type="RefSeq" id="NP_001077138.1">
    <property type="nucleotide sequence ID" value="NM_001083669.1"/>
</dbReference>
<dbReference type="FunCoup" id="A3FPG8">
    <property type="interactions" value="4011"/>
</dbReference>
<dbReference type="STRING" id="9913.ENSBTAP00000007532"/>
<dbReference type="GlyCosmos" id="A3FPG8">
    <property type="glycosylation" value="4 sites, No reported glycans"/>
</dbReference>
<dbReference type="GlyGen" id="A3FPG8">
    <property type="glycosylation" value="4 sites"/>
</dbReference>
<dbReference type="PaxDb" id="9913-ENSBTAP00000007532"/>
<dbReference type="GeneID" id="511614"/>
<dbReference type="KEGG" id="bta:511614"/>
<dbReference type="CTD" id="137964"/>
<dbReference type="eggNOG" id="KOG2898">
    <property type="taxonomic scope" value="Eukaryota"/>
</dbReference>
<dbReference type="InParanoid" id="A3FPG8"/>
<dbReference type="OrthoDB" id="10051137at2759"/>
<dbReference type="UniPathway" id="UPA00557">
    <property type="reaction ID" value="UER00612"/>
</dbReference>
<dbReference type="Proteomes" id="UP000009136">
    <property type="component" value="Unplaced"/>
</dbReference>
<dbReference type="GO" id="GO:0005789">
    <property type="term" value="C:endoplasmic reticulum membrane"/>
    <property type="evidence" value="ECO:0007669"/>
    <property type="project" value="UniProtKB-SubCell"/>
</dbReference>
<dbReference type="GO" id="GO:0004366">
    <property type="term" value="F:glycerol-3-phosphate O-acyltransferase activity"/>
    <property type="evidence" value="ECO:0007669"/>
    <property type="project" value="UniProtKB-EC"/>
</dbReference>
<dbReference type="GO" id="GO:0016024">
    <property type="term" value="P:CDP-diacylglycerol biosynthetic process"/>
    <property type="evidence" value="ECO:0007669"/>
    <property type="project" value="UniProtKB-UniPathway"/>
</dbReference>
<dbReference type="CDD" id="cd07991">
    <property type="entry name" value="LPLAT_LPCAT1-like"/>
    <property type="match status" value="1"/>
</dbReference>
<dbReference type="InterPro" id="IPR045252">
    <property type="entry name" value="LPCAT1-like"/>
</dbReference>
<dbReference type="InterPro" id="IPR002123">
    <property type="entry name" value="Plipid/glycerol_acylTrfase"/>
</dbReference>
<dbReference type="PANTHER" id="PTHR23063:SF37">
    <property type="entry name" value="GLYCEROL-3-PHOSPHATE ACYLTRANSFERASE 4"/>
    <property type="match status" value="1"/>
</dbReference>
<dbReference type="PANTHER" id="PTHR23063">
    <property type="entry name" value="PHOSPHOLIPID ACYLTRANSFERASE"/>
    <property type="match status" value="1"/>
</dbReference>
<dbReference type="Pfam" id="PF01553">
    <property type="entry name" value="Acyltransferase"/>
    <property type="match status" value="1"/>
</dbReference>
<dbReference type="SMART" id="SM00563">
    <property type="entry name" value="PlsC"/>
    <property type="match status" value="1"/>
</dbReference>
<dbReference type="SUPFAM" id="SSF69593">
    <property type="entry name" value="Glycerol-3-phosphate (1)-acyltransferase"/>
    <property type="match status" value="1"/>
</dbReference>
<proteinExistence type="inferred from homology"/>
<keyword id="KW-0012">Acyltransferase</keyword>
<keyword id="KW-0256">Endoplasmic reticulum</keyword>
<keyword id="KW-0325">Glycoprotein</keyword>
<keyword id="KW-0444">Lipid biosynthesis</keyword>
<keyword id="KW-0443">Lipid metabolism</keyword>
<keyword id="KW-0472">Membrane</keyword>
<keyword id="KW-0594">Phospholipid biosynthesis</keyword>
<keyword id="KW-1208">Phospholipid metabolism</keyword>
<keyword id="KW-1185">Reference proteome</keyword>
<keyword id="KW-0732">Signal</keyword>
<keyword id="KW-0808">Transferase</keyword>
<keyword id="KW-0812">Transmembrane</keyword>
<keyword id="KW-1133">Transmembrane helix</keyword>
<feature type="signal peptide" evidence="3">
    <location>
        <begin position="1"/>
        <end position="37"/>
    </location>
</feature>
<feature type="chain" id="PRO_0000297488" description="Glycerol-3-phosphate acyltransferase 4">
    <location>
        <begin position="38"/>
        <end position="456"/>
    </location>
</feature>
<feature type="transmembrane region" description="Helical" evidence="3">
    <location>
        <begin position="156"/>
        <end position="176"/>
    </location>
</feature>
<feature type="transmembrane region" description="Helical" evidence="3">
    <location>
        <begin position="180"/>
        <end position="200"/>
    </location>
</feature>
<feature type="short sequence motif" description="HXXXXD motif" evidence="2">
    <location>
        <begin position="248"/>
        <end position="253"/>
    </location>
</feature>
<feature type="glycosylation site" description="N-linked (GlcNAc...) asparagine" evidence="3">
    <location>
        <position position="247"/>
    </location>
</feature>
<feature type="glycosylation site" description="N-linked (GlcNAc...) asparagine" evidence="3">
    <location>
        <position position="327"/>
    </location>
</feature>
<feature type="glycosylation site" description="N-linked (GlcNAc...) asparagine" evidence="3">
    <location>
        <position position="328"/>
    </location>
</feature>
<feature type="glycosylation site" description="N-linked (GlcNAc...) asparagine" evidence="3">
    <location>
        <position position="362"/>
    </location>
</feature>